<accession>A4VHQ6</accession>
<reference key="1">
    <citation type="journal article" date="2008" name="Proc. Natl. Acad. Sci. U.S.A.">
        <title>Nitrogen fixation island and rhizosphere competence traits in the genome of root-associated Pseudomonas stutzeri A1501.</title>
        <authorList>
            <person name="Yan Y."/>
            <person name="Yang J."/>
            <person name="Dou Y."/>
            <person name="Chen M."/>
            <person name="Ping S."/>
            <person name="Peng J."/>
            <person name="Lu W."/>
            <person name="Zhang W."/>
            <person name="Yao Z."/>
            <person name="Li H."/>
            <person name="Liu W."/>
            <person name="He S."/>
            <person name="Geng L."/>
            <person name="Zhang X."/>
            <person name="Yang F."/>
            <person name="Yu H."/>
            <person name="Zhan Y."/>
            <person name="Li D."/>
            <person name="Lin Z."/>
            <person name="Wang Y."/>
            <person name="Elmerich C."/>
            <person name="Lin M."/>
            <person name="Jin Q."/>
        </authorList>
    </citation>
    <scope>NUCLEOTIDE SEQUENCE [LARGE SCALE GENOMIC DNA]</scope>
    <source>
        <strain>A1501</strain>
    </source>
</reference>
<gene>
    <name evidence="1" type="primary">rplQ</name>
    <name type="ordered locus">PST_0810</name>
</gene>
<protein>
    <recommendedName>
        <fullName evidence="1">Large ribosomal subunit protein bL17</fullName>
    </recommendedName>
    <alternativeName>
        <fullName evidence="2">50S ribosomal protein L17</fullName>
    </alternativeName>
</protein>
<feature type="chain" id="PRO_1000055922" description="Large ribosomal subunit protein bL17">
    <location>
        <begin position="1"/>
        <end position="129"/>
    </location>
</feature>
<name>RL17_STUS1</name>
<evidence type="ECO:0000255" key="1">
    <source>
        <dbReference type="HAMAP-Rule" id="MF_01368"/>
    </source>
</evidence>
<evidence type="ECO:0000305" key="2"/>
<proteinExistence type="inferred from homology"/>
<dbReference type="EMBL" id="CP000304">
    <property type="protein sequence ID" value="ABP78507.1"/>
    <property type="molecule type" value="Genomic_DNA"/>
</dbReference>
<dbReference type="RefSeq" id="WP_011912000.1">
    <property type="nucleotide sequence ID" value="NC_009434.1"/>
</dbReference>
<dbReference type="SMR" id="A4VHQ6"/>
<dbReference type="GeneID" id="75213411"/>
<dbReference type="KEGG" id="psa:PST_0810"/>
<dbReference type="eggNOG" id="COG0203">
    <property type="taxonomic scope" value="Bacteria"/>
</dbReference>
<dbReference type="HOGENOM" id="CLU_074407_2_0_6"/>
<dbReference type="Proteomes" id="UP000000233">
    <property type="component" value="Chromosome"/>
</dbReference>
<dbReference type="GO" id="GO:0022625">
    <property type="term" value="C:cytosolic large ribosomal subunit"/>
    <property type="evidence" value="ECO:0007669"/>
    <property type="project" value="TreeGrafter"/>
</dbReference>
<dbReference type="GO" id="GO:0003735">
    <property type="term" value="F:structural constituent of ribosome"/>
    <property type="evidence" value="ECO:0007669"/>
    <property type="project" value="InterPro"/>
</dbReference>
<dbReference type="GO" id="GO:0006412">
    <property type="term" value="P:translation"/>
    <property type="evidence" value="ECO:0007669"/>
    <property type="project" value="UniProtKB-UniRule"/>
</dbReference>
<dbReference type="FunFam" id="3.90.1030.10:FF:000001">
    <property type="entry name" value="50S ribosomal protein L17"/>
    <property type="match status" value="1"/>
</dbReference>
<dbReference type="Gene3D" id="3.90.1030.10">
    <property type="entry name" value="Ribosomal protein L17"/>
    <property type="match status" value="1"/>
</dbReference>
<dbReference type="HAMAP" id="MF_01368">
    <property type="entry name" value="Ribosomal_bL17"/>
    <property type="match status" value="1"/>
</dbReference>
<dbReference type="InterPro" id="IPR000456">
    <property type="entry name" value="Ribosomal_bL17"/>
</dbReference>
<dbReference type="InterPro" id="IPR047859">
    <property type="entry name" value="Ribosomal_bL17_CS"/>
</dbReference>
<dbReference type="InterPro" id="IPR036373">
    <property type="entry name" value="Ribosomal_bL17_sf"/>
</dbReference>
<dbReference type="NCBIfam" id="TIGR00059">
    <property type="entry name" value="L17"/>
    <property type="match status" value="1"/>
</dbReference>
<dbReference type="PANTHER" id="PTHR14413:SF16">
    <property type="entry name" value="LARGE RIBOSOMAL SUBUNIT PROTEIN BL17M"/>
    <property type="match status" value="1"/>
</dbReference>
<dbReference type="PANTHER" id="PTHR14413">
    <property type="entry name" value="RIBOSOMAL PROTEIN L17"/>
    <property type="match status" value="1"/>
</dbReference>
<dbReference type="Pfam" id="PF01196">
    <property type="entry name" value="Ribosomal_L17"/>
    <property type="match status" value="1"/>
</dbReference>
<dbReference type="SUPFAM" id="SSF64263">
    <property type="entry name" value="Prokaryotic ribosomal protein L17"/>
    <property type="match status" value="1"/>
</dbReference>
<dbReference type="PROSITE" id="PS01167">
    <property type="entry name" value="RIBOSOMAL_L17"/>
    <property type="match status" value="1"/>
</dbReference>
<organism>
    <name type="scientific">Stutzerimonas stutzeri (strain A1501)</name>
    <name type="common">Pseudomonas stutzeri</name>
    <dbReference type="NCBI Taxonomy" id="379731"/>
    <lineage>
        <taxon>Bacteria</taxon>
        <taxon>Pseudomonadati</taxon>
        <taxon>Pseudomonadota</taxon>
        <taxon>Gammaproteobacteria</taxon>
        <taxon>Pseudomonadales</taxon>
        <taxon>Pseudomonadaceae</taxon>
        <taxon>Stutzerimonas</taxon>
    </lineage>
</organism>
<sequence>MRHRKSGRHLSRTSAHRKAMFQNMAVSLFEHELIKTTLPKAKELRRVAEPLITLAKEDSVANRRLAFDRTRSKAAVGKLFNDLGKRYATRQGGYLRILKCGFRAGDNAPMAYVELVDRPVAGEVEAAAE</sequence>
<keyword id="KW-1185">Reference proteome</keyword>
<keyword id="KW-0687">Ribonucleoprotein</keyword>
<keyword id="KW-0689">Ribosomal protein</keyword>
<comment type="subunit">
    <text evidence="1">Part of the 50S ribosomal subunit. Contacts protein L32.</text>
</comment>
<comment type="similarity">
    <text evidence="1">Belongs to the bacterial ribosomal protein bL17 family.</text>
</comment>